<evidence type="ECO:0000255" key="1">
    <source>
        <dbReference type="HAMAP-Rule" id="MF_00051"/>
    </source>
</evidence>
<keyword id="KW-0028">Amino-acid biosynthesis</keyword>
<keyword id="KW-0963">Cytoplasm</keyword>
<keyword id="KW-0554">One-carbon metabolism</keyword>
<keyword id="KW-0663">Pyridoxal phosphate</keyword>
<keyword id="KW-0808">Transferase</keyword>
<sequence length="415" mass="45068">MFERSRFTIDQIDPEVFAAIQQENQRQEDHIELIASENYTSPAVMAAQGSQLTNKYAEGYPGKRYYGGCEYVDIVEQLAIDRVKQLFGAEAANVQPNSGSQANQGVYFAVLKPGDTIMGMSLAEGGHLTHGMALNMSGKWFNVVSYGLNAQEDIDYDALEKLAQEKKPKLIIAGASAFALRIDFERIGKVAKSIGAYFMVDMAHYAGLIAAGVYPNPVPHADFVTTTTHKSLRGPRGGVILMKAEHEKAINSSIFPGIQGGPLMHVIAGKAVAFKEALTPEFKAYQQQVVKNAAVLAETLIARGLRIVSGRTESHVMLVDLRAKNITGKEAERILGEAHLTVNKNAIPNDPEKPFVTSGIRVGSPAMTTRGFKEEEARIVGNLIADVLDNPHDAANIAAVREQVSALTKRFPVYG</sequence>
<accession>B3R5S0</accession>
<feature type="chain" id="PRO_1000091535" description="Serine hydroxymethyltransferase">
    <location>
        <begin position="1"/>
        <end position="415"/>
    </location>
</feature>
<feature type="binding site" evidence="1">
    <location>
        <position position="122"/>
    </location>
    <ligand>
        <name>(6S)-5,6,7,8-tetrahydrofolate</name>
        <dbReference type="ChEBI" id="CHEBI:57453"/>
    </ligand>
</feature>
<feature type="binding site" evidence="1">
    <location>
        <begin position="126"/>
        <end position="128"/>
    </location>
    <ligand>
        <name>(6S)-5,6,7,8-tetrahydrofolate</name>
        <dbReference type="ChEBI" id="CHEBI:57453"/>
    </ligand>
</feature>
<feature type="site" description="Plays an important role in substrate specificity" evidence="1">
    <location>
        <position position="229"/>
    </location>
</feature>
<feature type="modified residue" description="N6-(pyridoxal phosphate)lysine" evidence="1">
    <location>
        <position position="230"/>
    </location>
</feature>
<organism>
    <name type="scientific">Cupriavidus taiwanensis (strain DSM 17343 / BCRC 17206 / CCUG 44338 / CIP 107171 / LMG 19424 / R1)</name>
    <name type="common">Ralstonia taiwanensis (strain LMG 19424)</name>
    <dbReference type="NCBI Taxonomy" id="977880"/>
    <lineage>
        <taxon>Bacteria</taxon>
        <taxon>Pseudomonadati</taxon>
        <taxon>Pseudomonadota</taxon>
        <taxon>Betaproteobacteria</taxon>
        <taxon>Burkholderiales</taxon>
        <taxon>Burkholderiaceae</taxon>
        <taxon>Cupriavidus</taxon>
    </lineage>
</organism>
<proteinExistence type="inferred from homology"/>
<dbReference type="EC" id="2.1.2.1" evidence="1"/>
<dbReference type="EMBL" id="CU633749">
    <property type="protein sequence ID" value="CAQ70256.1"/>
    <property type="molecule type" value="Genomic_DNA"/>
</dbReference>
<dbReference type="RefSeq" id="WP_012353558.1">
    <property type="nucleotide sequence ID" value="NC_010528.1"/>
</dbReference>
<dbReference type="SMR" id="B3R5S0"/>
<dbReference type="GeneID" id="29761818"/>
<dbReference type="KEGG" id="cti:RALTA_A2322"/>
<dbReference type="eggNOG" id="COG0112">
    <property type="taxonomic scope" value="Bacteria"/>
</dbReference>
<dbReference type="HOGENOM" id="CLU_022477_2_1_4"/>
<dbReference type="BioCyc" id="CTAI977880:RALTA_RS11275-MONOMER"/>
<dbReference type="UniPathway" id="UPA00193"/>
<dbReference type="UniPathway" id="UPA00288">
    <property type="reaction ID" value="UER01023"/>
</dbReference>
<dbReference type="Proteomes" id="UP000001692">
    <property type="component" value="Chromosome 1"/>
</dbReference>
<dbReference type="GO" id="GO:0005829">
    <property type="term" value="C:cytosol"/>
    <property type="evidence" value="ECO:0007669"/>
    <property type="project" value="TreeGrafter"/>
</dbReference>
<dbReference type="GO" id="GO:0004372">
    <property type="term" value="F:glycine hydroxymethyltransferase activity"/>
    <property type="evidence" value="ECO:0007669"/>
    <property type="project" value="UniProtKB-UniRule"/>
</dbReference>
<dbReference type="GO" id="GO:0030170">
    <property type="term" value="F:pyridoxal phosphate binding"/>
    <property type="evidence" value="ECO:0007669"/>
    <property type="project" value="UniProtKB-UniRule"/>
</dbReference>
<dbReference type="GO" id="GO:0019264">
    <property type="term" value="P:glycine biosynthetic process from serine"/>
    <property type="evidence" value="ECO:0007669"/>
    <property type="project" value="UniProtKB-UniRule"/>
</dbReference>
<dbReference type="GO" id="GO:0035999">
    <property type="term" value="P:tetrahydrofolate interconversion"/>
    <property type="evidence" value="ECO:0007669"/>
    <property type="project" value="UniProtKB-UniRule"/>
</dbReference>
<dbReference type="CDD" id="cd00378">
    <property type="entry name" value="SHMT"/>
    <property type="match status" value="1"/>
</dbReference>
<dbReference type="FunFam" id="3.40.640.10:FF:000001">
    <property type="entry name" value="Serine hydroxymethyltransferase"/>
    <property type="match status" value="1"/>
</dbReference>
<dbReference type="FunFam" id="3.90.1150.10:FF:000003">
    <property type="entry name" value="Serine hydroxymethyltransferase"/>
    <property type="match status" value="1"/>
</dbReference>
<dbReference type="Gene3D" id="3.90.1150.10">
    <property type="entry name" value="Aspartate Aminotransferase, domain 1"/>
    <property type="match status" value="1"/>
</dbReference>
<dbReference type="Gene3D" id="3.40.640.10">
    <property type="entry name" value="Type I PLP-dependent aspartate aminotransferase-like (Major domain)"/>
    <property type="match status" value="1"/>
</dbReference>
<dbReference type="HAMAP" id="MF_00051">
    <property type="entry name" value="SHMT"/>
    <property type="match status" value="1"/>
</dbReference>
<dbReference type="InterPro" id="IPR015424">
    <property type="entry name" value="PyrdxlP-dep_Trfase"/>
</dbReference>
<dbReference type="InterPro" id="IPR015421">
    <property type="entry name" value="PyrdxlP-dep_Trfase_major"/>
</dbReference>
<dbReference type="InterPro" id="IPR015422">
    <property type="entry name" value="PyrdxlP-dep_Trfase_small"/>
</dbReference>
<dbReference type="InterPro" id="IPR001085">
    <property type="entry name" value="Ser_HO-MeTrfase"/>
</dbReference>
<dbReference type="InterPro" id="IPR049943">
    <property type="entry name" value="Ser_HO-MeTrfase-like"/>
</dbReference>
<dbReference type="InterPro" id="IPR019798">
    <property type="entry name" value="Ser_HO-MeTrfase_PLP_BS"/>
</dbReference>
<dbReference type="InterPro" id="IPR039429">
    <property type="entry name" value="SHMT-like_dom"/>
</dbReference>
<dbReference type="NCBIfam" id="NF000586">
    <property type="entry name" value="PRK00011.1"/>
    <property type="match status" value="1"/>
</dbReference>
<dbReference type="PANTHER" id="PTHR11680">
    <property type="entry name" value="SERINE HYDROXYMETHYLTRANSFERASE"/>
    <property type="match status" value="1"/>
</dbReference>
<dbReference type="PANTHER" id="PTHR11680:SF50">
    <property type="entry name" value="SERINE HYDROXYMETHYLTRANSFERASE"/>
    <property type="match status" value="1"/>
</dbReference>
<dbReference type="Pfam" id="PF00464">
    <property type="entry name" value="SHMT"/>
    <property type="match status" value="1"/>
</dbReference>
<dbReference type="PIRSF" id="PIRSF000412">
    <property type="entry name" value="SHMT"/>
    <property type="match status" value="1"/>
</dbReference>
<dbReference type="SUPFAM" id="SSF53383">
    <property type="entry name" value="PLP-dependent transferases"/>
    <property type="match status" value="1"/>
</dbReference>
<dbReference type="PROSITE" id="PS00096">
    <property type="entry name" value="SHMT"/>
    <property type="match status" value="1"/>
</dbReference>
<reference key="1">
    <citation type="journal article" date="2008" name="Genome Res.">
        <title>Genome sequence of the beta-rhizobium Cupriavidus taiwanensis and comparative genomics of rhizobia.</title>
        <authorList>
            <person name="Amadou C."/>
            <person name="Pascal G."/>
            <person name="Mangenot S."/>
            <person name="Glew M."/>
            <person name="Bontemps C."/>
            <person name="Capela D."/>
            <person name="Carrere S."/>
            <person name="Cruveiller S."/>
            <person name="Dossat C."/>
            <person name="Lajus A."/>
            <person name="Marchetti M."/>
            <person name="Poinsot V."/>
            <person name="Rouy Z."/>
            <person name="Servin B."/>
            <person name="Saad M."/>
            <person name="Schenowitz C."/>
            <person name="Barbe V."/>
            <person name="Batut J."/>
            <person name="Medigue C."/>
            <person name="Masson-Boivin C."/>
        </authorList>
    </citation>
    <scope>NUCLEOTIDE SEQUENCE [LARGE SCALE GENOMIC DNA]</scope>
    <source>
        <strain>DSM 17343 / BCRC 17206 / CCUG 44338 / CIP 107171 / LMG 19424 / R1</strain>
    </source>
</reference>
<gene>
    <name evidence="1" type="primary">glyA</name>
    <name type="ordered locus">RALTA_A2322</name>
</gene>
<comment type="function">
    <text evidence="1">Catalyzes the reversible interconversion of serine and glycine with tetrahydrofolate (THF) serving as the one-carbon carrier. This reaction serves as the major source of one-carbon groups required for the biosynthesis of purines, thymidylate, methionine, and other important biomolecules. Also exhibits THF-independent aldolase activity toward beta-hydroxyamino acids, producing glycine and aldehydes, via a retro-aldol mechanism.</text>
</comment>
<comment type="catalytic activity">
    <reaction evidence="1">
        <text>(6R)-5,10-methylene-5,6,7,8-tetrahydrofolate + glycine + H2O = (6S)-5,6,7,8-tetrahydrofolate + L-serine</text>
        <dbReference type="Rhea" id="RHEA:15481"/>
        <dbReference type="ChEBI" id="CHEBI:15377"/>
        <dbReference type="ChEBI" id="CHEBI:15636"/>
        <dbReference type="ChEBI" id="CHEBI:33384"/>
        <dbReference type="ChEBI" id="CHEBI:57305"/>
        <dbReference type="ChEBI" id="CHEBI:57453"/>
        <dbReference type="EC" id="2.1.2.1"/>
    </reaction>
</comment>
<comment type="cofactor">
    <cofactor evidence="1">
        <name>pyridoxal 5'-phosphate</name>
        <dbReference type="ChEBI" id="CHEBI:597326"/>
    </cofactor>
</comment>
<comment type="pathway">
    <text evidence="1">One-carbon metabolism; tetrahydrofolate interconversion.</text>
</comment>
<comment type="pathway">
    <text evidence="1">Amino-acid biosynthesis; glycine biosynthesis; glycine from L-serine: step 1/1.</text>
</comment>
<comment type="subunit">
    <text evidence="1">Homodimer.</text>
</comment>
<comment type="subcellular location">
    <subcellularLocation>
        <location evidence="1">Cytoplasm</location>
    </subcellularLocation>
</comment>
<comment type="similarity">
    <text evidence="1">Belongs to the SHMT family.</text>
</comment>
<name>GLYA_CUPTR</name>
<protein>
    <recommendedName>
        <fullName evidence="1">Serine hydroxymethyltransferase</fullName>
        <shortName evidence="1">SHMT</shortName>
        <shortName evidence="1">Serine methylase</shortName>
        <ecNumber evidence="1">2.1.2.1</ecNumber>
    </recommendedName>
</protein>